<keyword id="KW-0067">ATP-binding</keyword>
<keyword id="KW-0963">Cytoplasm</keyword>
<keyword id="KW-0418">Kinase</keyword>
<keyword id="KW-0547">Nucleotide-binding</keyword>
<keyword id="KW-1185">Reference proteome</keyword>
<keyword id="KW-0808">Transferase</keyword>
<organism>
    <name type="scientific">Prochlorococcus marinus (strain SARG / CCMP1375 / SS120)</name>
    <dbReference type="NCBI Taxonomy" id="167539"/>
    <lineage>
        <taxon>Bacteria</taxon>
        <taxon>Bacillati</taxon>
        <taxon>Cyanobacteriota</taxon>
        <taxon>Cyanophyceae</taxon>
        <taxon>Synechococcales</taxon>
        <taxon>Prochlorococcaceae</taxon>
        <taxon>Prochlorococcus</taxon>
    </lineage>
</organism>
<accession>Q7VDB6</accession>
<evidence type="ECO:0000255" key="1">
    <source>
        <dbReference type="HAMAP-Rule" id="MF_00328"/>
    </source>
</evidence>
<sequence>MTNYNGLIVITGPSGVGKGTLVKKLLLENPEIWLSISATTRTPREGEINGKDYFFLNKKEFIDLVDKEGFLEWAEFAGNFYGTPRAQAQEKISVGKKVLLEIELDGARQVRKTFPEGFQIFIAPPSFEELEKRIRTRGTDSELAIQSRLNRAKEELLAKNEFDAIVINDQLDIALLEIKKLIKS</sequence>
<gene>
    <name evidence="1" type="primary">gmk</name>
    <name type="ordered locus">Pro_0465</name>
</gene>
<proteinExistence type="inferred from homology"/>
<reference key="1">
    <citation type="journal article" date="2003" name="Proc. Natl. Acad. Sci. U.S.A.">
        <title>Genome sequence of the cyanobacterium Prochlorococcus marinus SS120, a nearly minimal oxyphototrophic genome.</title>
        <authorList>
            <person name="Dufresne A."/>
            <person name="Salanoubat M."/>
            <person name="Partensky F."/>
            <person name="Artiguenave F."/>
            <person name="Axmann I.M."/>
            <person name="Barbe V."/>
            <person name="Duprat S."/>
            <person name="Galperin M.Y."/>
            <person name="Koonin E.V."/>
            <person name="Le Gall F."/>
            <person name="Makarova K.S."/>
            <person name="Ostrowski M."/>
            <person name="Oztas S."/>
            <person name="Robert C."/>
            <person name="Rogozin I.B."/>
            <person name="Scanlan D.J."/>
            <person name="Tandeau de Marsac N."/>
            <person name="Weissenbach J."/>
            <person name="Wincker P."/>
            <person name="Wolf Y.I."/>
            <person name="Hess W.R."/>
        </authorList>
    </citation>
    <scope>NUCLEOTIDE SEQUENCE [LARGE SCALE GENOMIC DNA]</scope>
    <source>
        <strain>SARG / CCMP1375 / SS120</strain>
    </source>
</reference>
<comment type="function">
    <text evidence="1">Essential for recycling GMP and indirectly, cGMP.</text>
</comment>
<comment type="catalytic activity">
    <reaction evidence="1">
        <text>GMP + ATP = GDP + ADP</text>
        <dbReference type="Rhea" id="RHEA:20780"/>
        <dbReference type="ChEBI" id="CHEBI:30616"/>
        <dbReference type="ChEBI" id="CHEBI:58115"/>
        <dbReference type="ChEBI" id="CHEBI:58189"/>
        <dbReference type="ChEBI" id="CHEBI:456216"/>
        <dbReference type="EC" id="2.7.4.8"/>
    </reaction>
</comment>
<comment type="subcellular location">
    <subcellularLocation>
        <location evidence="1">Cytoplasm</location>
    </subcellularLocation>
</comment>
<comment type="similarity">
    <text evidence="1">Belongs to the guanylate kinase family.</text>
</comment>
<feature type="chain" id="PRO_0000170584" description="Guanylate kinase">
    <location>
        <begin position="1"/>
        <end position="184"/>
    </location>
</feature>
<feature type="domain" description="Guanylate kinase-like" evidence="1">
    <location>
        <begin position="5"/>
        <end position="183"/>
    </location>
</feature>
<feature type="binding site" evidence="1">
    <location>
        <begin position="12"/>
        <end position="19"/>
    </location>
    <ligand>
        <name>ATP</name>
        <dbReference type="ChEBI" id="CHEBI:30616"/>
    </ligand>
</feature>
<dbReference type="EC" id="2.7.4.8" evidence="1"/>
<dbReference type="EMBL" id="AE017126">
    <property type="protein sequence ID" value="AAP99510.1"/>
    <property type="molecule type" value="Genomic_DNA"/>
</dbReference>
<dbReference type="RefSeq" id="NP_874858.1">
    <property type="nucleotide sequence ID" value="NC_005042.1"/>
</dbReference>
<dbReference type="RefSeq" id="WP_011124620.1">
    <property type="nucleotide sequence ID" value="NC_005042.1"/>
</dbReference>
<dbReference type="SMR" id="Q7VDB6"/>
<dbReference type="STRING" id="167539.Pro_0465"/>
<dbReference type="EnsemblBacteria" id="AAP99510">
    <property type="protein sequence ID" value="AAP99510"/>
    <property type="gene ID" value="Pro_0465"/>
</dbReference>
<dbReference type="KEGG" id="pma:Pro_0465"/>
<dbReference type="PATRIC" id="fig|167539.5.peg.478"/>
<dbReference type="eggNOG" id="COG0194">
    <property type="taxonomic scope" value="Bacteria"/>
</dbReference>
<dbReference type="HOGENOM" id="CLU_001715_1_2_3"/>
<dbReference type="OrthoDB" id="9808150at2"/>
<dbReference type="Proteomes" id="UP000001420">
    <property type="component" value="Chromosome"/>
</dbReference>
<dbReference type="GO" id="GO:0005829">
    <property type="term" value="C:cytosol"/>
    <property type="evidence" value="ECO:0007669"/>
    <property type="project" value="TreeGrafter"/>
</dbReference>
<dbReference type="GO" id="GO:0005524">
    <property type="term" value="F:ATP binding"/>
    <property type="evidence" value="ECO:0007669"/>
    <property type="project" value="UniProtKB-UniRule"/>
</dbReference>
<dbReference type="GO" id="GO:0004385">
    <property type="term" value="F:guanylate kinase activity"/>
    <property type="evidence" value="ECO:0007669"/>
    <property type="project" value="UniProtKB-UniRule"/>
</dbReference>
<dbReference type="CDD" id="cd00071">
    <property type="entry name" value="GMPK"/>
    <property type="match status" value="1"/>
</dbReference>
<dbReference type="FunFam" id="3.30.63.10:FF:000002">
    <property type="entry name" value="Guanylate kinase 1"/>
    <property type="match status" value="1"/>
</dbReference>
<dbReference type="Gene3D" id="3.30.63.10">
    <property type="entry name" value="Guanylate Kinase phosphate binding domain"/>
    <property type="match status" value="1"/>
</dbReference>
<dbReference type="Gene3D" id="3.40.50.300">
    <property type="entry name" value="P-loop containing nucleotide triphosphate hydrolases"/>
    <property type="match status" value="1"/>
</dbReference>
<dbReference type="HAMAP" id="MF_00328">
    <property type="entry name" value="Guanylate_kinase"/>
    <property type="match status" value="1"/>
</dbReference>
<dbReference type="InterPro" id="IPR008145">
    <property type="entry name" value="GK/Ca_channel_bsu"/>
</dbReference>
<dbReference type="InterPro" id="IPR008144">
    <property type="entry name" value="Guanylate_kin-like_dom"/>
</dbReference>
<dbReference type="InterPro" id="IPR017665">
    <property type="entry name" value="Guanylate_kinase"/>
</dbReference>
<dbReference type="InterPro" id="IPR020590">
    <property type="entry name" value="Guanylate_kinase_CS"/>
</dbReference>
<dbReference type="InterPro" id="IPR027417">
    <property type="entry name" value="P-loop_NTPase"/>
</dbReference>
<dbReference type="NCBIfam" id="TIGR03263">
    <property type="entry name" value="guanyl_kin"/>
    <property type="match status" value="1"/>
</dbReference>
<dbReference type="PANTHER" id="PTHR23117:SF13">
    <property type="entry name" value="GUANYLATE KINASE"/>
    <property type="match status" value="1"/>
</dbReference>
<dbReference type="PANTHER" id="PTHR23117">
    <property type="entry name" value="GUANYLATE KINASE-RELATED"/>
    <property type="match status" value="1"/>
</dbReference>
<dbReference type="Pfam" id="PF00625">
    <property type="entry name" value="Guanylate_kin"/>
    <property type="match status" value="1"/>
</dbReference>
<dbReference type="SMART" id="SM00072">
    <property type="entry name" value="GuKc"/>
    <property type="match status" value="1"/>
</dbReference>
<dbReference type="SUPFAM" id="SSF52540">
    <property type="entry name" value="P-loop containing nucleoside triphosphate hydrolases"/>
    <property type="match status" value="1"/>
</dbReference>
<dbReference type="PROSITE" id="PS00856">
    <property type="entry name" value="GUANYLATE_KINASE_1"/>
    <property type="match status" value="1"/>
</dbReference>
<dbReference type="PROSITE" id="PS50052">
    <property type="entry name" value="GUANYLATE_KINASE_2"/>
    <property type="match status" value="1"/>
</dbReference>
<name>KGUA_PROMA</name>
<protein>
    <recommendedName>
        <fullName evidence="1">Guanylate kinase</fullName>
        <ecNumber evidence="1">2.7.4.8</ecNumber>
    </recommendedName>
    <alternativeName>
        <fullName evidence="1">GMP kinase</fullName>
    </alternativeName>
</protein>